<keyword id="KW-0007">Acetylation</keyword>
<keyword id="KW-0024">Alternative initiation</keyword>
<keyword id="KW-0025">Alternative splicing</keyword>
<keyword id="KW-1166">Caveolin-mediated endocytosis of virus by host</keyword>
<keyword id="KW-1170">Fusion of virus membrane with host endosomal membrane</keyword>
<keyword id="KW-1168">Fusion of virus membrane with host membrane</keyword>
<keyword id="KW-0325">Glycoprotein</keyword>
<keyword id="KW-0945">Host-virus interaction</keyword>
<keyword id="KW-0449">Lipoprotein</keyword>
<keyword id="KW-0472">Membrane</keyword>
<keyword id="KW-0519">Myristate</keyword>
<keyword id="KW-0812">Transmembrane</keyword>
<keyword id="KW-1133">Transmembrane helix</keyword>
<keyword id="KW-1161">Viral attachment to host cell</keyword>
<keyword id="KW-0261">Viral envelope protein</keyword>
<keyword id="KW-1162">Viral penetration into host cytoplasm</keyword>
<keyword id="KW-0946">Virion</keyword>
<keyword id="KW-1164">Virus endocytosis by host</keyword>
<keyword id="KW-1160">Virus entry into host cell</keyword>
<feature type="initiator methionine" description="Removed; by host" evidence="3">
    <location>
        <position position="1"/>
    </location>
</feature>
<feature type="chain" id="PRO_0000319092" description="Large envelope protein" evidence="3">
    <location>
        <begin position="2"/>
        <end position="400"/>
    </location>
</feature>
<feature type="topological domain" description="Intravirion; in internal conformation" evidence="3">
    <location>
        <begin position="2"/>
        <end position="253"/>
    </location>
</feature>
<feature type="topological domain" description="Virion surface; in external conformation" evidence="3">
    <location>
        <begin position="2"/>
        <end position="181"/>
    </location>
</feature>
<feature type="transmembrane region" description="Helical; Name=TM1; Note=In external conformation" evidence="3">
    <location>
        <begin position="182"/>
        <end position="202"/>
    </location>
</feature>
<feature type="topological domain" description="Intravirion; in external conformation" evidence="3">
    <location>
        <begin position="203"/>
        <end position="253"/>
    </location>
</feature>
<feature type="transmembrane region" description="Helical; Name=TM2" evidence="3">
    <location>
        <begin position="254"/>
        <end position="274"/>
    </location>
</feature>
<feature type="topological domain" description="Virion surface" evidence="3">
    <location>
        <begin position="275"/>
        <end position="348"/>
    </location>
</feature>
<feature type="transmembrane region" description="Helical" evidence="3">
    <location>
        <begin position="349"/>
        <end position="369"/>
    </location>
</feature>
<feature type="topological domain" description="Intravirion" evidence="3">
    <location>
        <begin position="370"/>
        <end position="375"/>
    </location>
</feature>
<feature type="transmembrane region" description="Helical; Name=TM3" evidence="3">
    <location>
        <begin position="376"/>
        <end position="398"/>
    </location>
</feature>
<feature type="topological domain" description="Virion surface" evidence="3">
    <location>
        <begin position="399"/>
        <end position="400"/>
    </location>
</feature>
<feature type="region of interest" description="Pre-S" evidence="3">
    <location>
        <begin position="2"/>
        <end position="174"/>
    </location>
</feature>
<feature type="region of interest" description="Pre-S1" evidence="3">
    <location>
        <begin position="2"/>
        <end position="119"/>
    </location>
</feature>
<feature type="region of interest" description="Disordered" evidence="4">
    <location>
        <begin position="84"/>
        <end position="114"/>
    </location>
</feature>
<feature type="region of interest" description="Pre-S2" evidence="3">
    <location>
        <begin position="120"/>
        <end position="174"/>
    </location>
</feature>
<feature type="lipid moiety-binding region" description="N-myristoyl glycine; by host" evidence="3">
    <location>
        <position position="2"/>
    </location>
</feature>
<feature type="glycosylation site" description="N-linked (GlcNAc...) asparagine; by host" evidence="3">
    <location>
        <position position="320"/>
    </location>
</feature>
<feature type="splice variant" id="VSP_031421" description="In isoform S." evidence="5">
    <location>
        <begin position="1"/>
        <end position="174"/>
    </location>
</feature>
<feature type="splice variant" id="VSP_031422" description="In isoform M." evidence="5">
    <location>
        <begin position="1"/>
        <end position="119"/>
    </location>
</feature>
<feature type="modified residue" description="N-acetylmethionine" evidence="5">
    <location sequence="Q99HS3-2">
        <position position="1"/>
    </location>
</feature>
<feature type="glycosylation site" description="N-linked (GlcNAc...) asparagine" evidence="5">
    <location sequence="Q99HS3-2">
        <position position="4"/>
    </location>
</feature>
<sequence>MGAPLSTTRRGMGQNLSVPNPLGFFPDHQLDPLFRANSSSPDWDFNKNKDNWPMANKVGVGGYGPGFTPPHGGLLGWSPQAQGVLTTLPADPPPASTNRRSGRKPTPVSPPLRDTHPQAMQWNSTQFHQALLDPRVRALYFPAGGSSSETQNPAPTIASLTSSIFLKTGGPATNMDNITSGLLGPLLVLQAVCFLLTKILTIPQSLDSWWTSLNFLGGTPGCPGQNSQSPTSNHLPTSCPPTCPGYRWMCLRRFIIFLFILLLCLIFLLVLVDYQGMLPVCPPLPGSTTTSTGPCKTCTTLAQGTSMFPSCCCSKPSDGNCTCIPIPSSWALGKYLWEWASARFSWLSLLVQFVQWCVGLSPTVWLLVIWMIWYWGPNLCSILSPFIPLLPIFCYLWVSI</sequence>
<organismHost>
    <name type="scientific">Homo sapiens</name>
    <name type="common">Human</name>
    <dbReference type="NCBI Taxonomy" id="9606"/>
</organismHost>
<organismHost>
    <name type="scientific">Pan troglodytes</name>
    <name type="common">Chimpanzee</name>
    <dbReference type="NCBI Taxonomy" id="9598"/>
</organismHost>
<organism>
    <name type="scientific">Hepatitis B virus genotype F1 (isolate Argentina/sa11/2000)</name>
    <name type="common">HBV-F</name>
    <dbReference type="NCBI Taxonomy" id="489500"/>
    <lineage>
        <taxon>Viruses</taxon>
        <taxon>Riboviria</taxon>
        <taxon>Pararnavirae</taxon>
        <taxon>Artverviricota</taxon>
        <taxon>Revtraviricetes</taxon>
        <taxon>Blubervirales</taxon>
        <taxon>Hepadnaviridae</taxon>
        <taxon>Orthohepadnavirus</taxon>
        <taxon>Hepatitis B virus</taxon>
        <taxon>hepatitis B virus genotype F</taxon>
    </lineage>
</organism>
<evidence type="ECO:0000250" key="1">
    <source>
        <dbReference type="UniProtKB" id="P03138"/>
    </source>
</evidence>
<evidence type="ECO:0000250" key="2">
    <source>
        <dbReference type="UniProtKB" id="P03141"/>
    </source>
</evidence>
<evidence type="ECO:0000255" key="3">
    <source>
        <dbReference type="HAMAP-Rule" id="MF_04075"/>
    </source>
</evidence>
<evidence type="ECO:0000256" key="4">
    <source>
        <dbReference type="SAM" id="MobiDB-lite"/>
    </source>
</evidence>
<evidence type="ECO:0000305" key="5"/>
<comment type="function">
    <text evidence="3">The large envelope protein exists in two topological conformations, one which is termed 'external' or Le-HBsAg and the other 'internal' or Li-HBsAg. In its external conformation the protein attaches the virus to cell receptors and thereby initiating infection. This interaction determines the species specificity and liver tropism. This attachment induces virion internalization predominantly through caveolin-mediated endocytosis. The large envelope protein also assures fusion between virion membrane and endosomal membrane. In its internal conformation the protein plays a role in virion morphogenesis and mediates the contact with the nucleocapsid like a matrix protein.</text>
</comment>
<comment type="function">
    <text evidence="3">The middle envelope protein plays an important role in the budding of the virion. It is involved in the induction of budding in a nucleocapsid independent way. In this process the majority of envelope proteins bud to form subviral lipoprotein particles of 22 nm of diameter that do not contain a nucleocapsid.</text>
</comment>
<comment type="subunit">
    <molecule>Isoform L</molecule>
    <text evidence="2">In its internal form (Li-HBsAg), interacts with the capsid protein and with the isoform S. Interacts with host chaperone CANX.</text>
</comment>
<comment type="subunit">
    <molecule>Isoform M</molecule>
    <text evidence="2">Associates with host chaperone CANX through its pre-S2 N glycan; this association may be essential for isoform M proper secretion.</text>
</comment>
<comment type="subunit">
    <molecule>Isoform S</molecule>
    <text evidence="2">Interacts with isoform L. Interacts with the antigens of satellite virus HDV (HDVAgs); this interaction is required for encapsidation of HDV genomic RNA.</text>
</comment>
<comment type="subcellular location">
    <subcellularLocation>
        <location evidence="3">Virion membrane</location>
    </subcellularLocation>
</comment>
<comment type="alternative products">
    <event type="alternative splicing"/>
    <event type="alternative initiation"/>
    <isoform>
        <id>Q99HS3-1</id>
        <name>L</name>
        <name>Large envelope protein</name>
        <name>LHB</name>
        <name>L-HBsAg</name>
        <sequence type="displayed"/>
    </isoform>
    <isoform>
        <id>Q99HS3-2</id>
        <name>M</name>
        <name>Middle envelope protein</name>
        <name>MHB</name>
        <name>M-HBsAg</name>
        <sequence type="described" ref="VSP_031422"/>
    </isoform>
    <isoform>
        <id>Q99HS3-3</id>
        <name>S</name>
        <name>Small envelope protein</name>
        <name>SHB</name>
        <name>S-HBsAg</name>
        <sequence type="described" ref="VSP_031421"/>
    </isoform>
</comment>
<comment type="domain">
    <text evidence="3">The large envelope protein is synthesized with the pre-S region at the cytosolic side of the endoplasmic reticulum and, hence will be within the virion after budding. Therefore the pre-S region is not N-glycosylated. Later a post-translational translocation of N-terminal pre-S and TM1 domains occur in about 50% of proteins at the virion surface. These molecules change their topology by an unknown mechanism, resulting in exposure of pre-S region at virion surface. For isoform M in contrast, the pre-S2 region is translocated cotranslationally to the endoplasmic reticulum lumen and is N-glycosylated.</text>
</comment>
<comment type="PTM">
    <text evidence="1 3">Isoform M is N-terminally acetylated by host at a ratio of 90%, and N-glycosylated by host at the pre-S2 region.</text>
</comment>
<comment type="PTM">
    <text evidence="3">Myristoylated.</text>
</comment>
<comment type="biotechnology">
    <text>Systematic vaccination of individuals at risk of exposure to the virus has been the main method of controlling the morbidity and mortality associated with hepatitis B. The first hepatitis B vaccine was manufactured by the purification and inactivation of HBsAg obtained from the plasma of chronic hepatitis B virus carriers. The vaccine is now produced by recombinant DNA techniques and expression of the S isoform in yeast cells. The pre-S region do not seem to induce strong enough antigenic response.</text>
</comment>
<comment type="similarity">
    <text evidence="3">Belongs to the orthohepadnavirus major surface antigen family.</text>
</comment>
<comment type="sequence caution" evidence="5">
    <conflict type="erroneous initiation">
        <sequence resource="EMBL-CDS" id="AAG49722"/>
    </conflict>
</comment>
<comment type="sequence caution" evidence="5">
    <conflict type="erroneous initiation">
        <sequence resource="EMBL-CDS" id="AAG49723"/>
    </conflict>
</comment>
<accession>Q99HS3</accession>
<accession>Q99HS2</accession>
<accession>Q99HS6</accession>
<gene>
    <name evidence="3" type="primary">S</name>
</gene>
<reference key="1">
    <citation type="journal article" date="2001" name="J. Clin. Microbiol.">
        <title>Phylogenetic origin of hepatitis B virus strains with precore C-1858 variant.</title>
        <authorList>
            <person name="Alestig E."/>
            <person name="Hannoun C."/>
            <person name="Horal P."/>
            <person name="Lindh M."/>
        </authorList>
    </citation>
    <scope>NUCLEOTIDE SEQUENCE [GENOMIC DNA]</scope>
</reference>
<reference key="2">
    <citation type="journal article" date="1996" name="Intervirology">
        <title>Functions of the large hepatitis B virus surface protein in viral particle morphogenesis.</title>
        <authorList>
            <person name="Bruss V."/>
            <person name="Gerhardt E."/>
            <person name="Vieluf K."/>
            <person name="Wunderlich G."/>
        </authorList>
    </citation>
    <scope>REVIEW</scope>
</reference>
<reference key="3">
    <citation type="journal article" date="1998" name="Adv. Exp. Med. Biol.">
        <title>Role of glycan processing in hepatitis B virus envelope protein trafficking.</title>
        <authorList>
            <person name="Block T.M."/>
            <person name="Lu X."/>
            <person name="Mehta A."/>
            <person name="Park J."/>
            <person name="Blumberg B.S."/>
            <person name="Dwek R."/>
        </authorList>
    </citation>
    <scope>REVIEW</scope>
</reference>
<reference key="4">
    <citation type="journal article" date="2004" name="Virus Res.">
        <title>Envelopment of the hepatitis B virus nucleocapsid.</title>
        <authorList>
            <person name="Bruss V."/>
        </authorList>
    </citation>
    <scope>REVIEW</scope>
</reference>
<reference key="5">
    <citation type="journal article" date="2006" name="Cancer Sci.">
        <title>Hepatitis B virus pre-S mutants, endoplasmic reticulum stress and hepatocarcinogenesis.</title>
        <authorList>
            <person name="Wang H.C."/>
            <person name="Huang W."/>
            <person name="Lai M.D."/>
            <person name="Su I.J."/>
        </authorList>
    </citation>
    <scope>REVIEW</scope>
</reference>
<protein>
    <recommendedName>
        <fullName evidence="3">Large envelope protein</fullName>
    </recommendedName>
    <alternativeName>
        <fullName evidence="3">L glycoprotein</fullName>
    </alternativeName>
    <alternativeName>
        <fullName evidence="3">L-HBsAg</fullName>
        <shortName evidence="3">LHB</shortName>
    </alternativeName>
    <alternativeName>
        <fullName evidence="3">Large S protein</fullName>
    </alternativeName>
    <alternativeName>
        <fullName evidence="3">Large surface protein</fullName>
    </alternativeName>
    <alternativeName>
        <fullName evidence="3">Major surface antigen</fullName>
    </alternativeName>
</protein>
<dbReference type="EMBL" id="AF223963">
    <property type="protein sequence ID" value="AAG49720.1"/>
    <property type="molecule type" value="Genomic_DNA"/>
</dbReference>
<dbReference type="EMBL" id="AF223963">
    <property type="protein sequence ID" value="AAG49722.1"/>
    <property type="status" value="ALT_INIT"/>
    <property type="molecule type" value="Genomic_DNA"/>
</dbReference>
<dbReference type="EMBL" id="AF223963">
    <property type="protein sequence ID" value="AAG49723.1"/>
    <property type="status" value="ALT_INIT"/>
    <property type="molecule type" value="Genomic_DNA"/>
</dbReference>
<dbReference type="PIR" id="JQ2119">
    <property type="entry name" value="JQ2119"/>
</dbReference>
<dbReference type="PIR" id="JQ2120">
    <property type="entry name" value="JQ2120"/>
</dbReference>
<dbReference type="PIR" id="JQ2121">
    <property type="entry name" value="JQ2121"/>
</dbReference>
<dbReference type="PIR" id="JQ2122">
    <property type="entry name" value="JQ2122"/>
</dbReference>
<dbReference type="SMR" id="Q99HS3"/>
<dbReference type="GlyCosmos" id="Q99HS3">
    <property type="glycosylation" value="2 sites, No reported glycans"/>
</dbReference>
<dbReference type="Proteomes" id="UP000001180">
    <property type="component" value="Genome"/>
</dbReference>
<dbReference type="GO" id="GO:0016020">
    <property type="term" value="C:membrane"/>
    <property type="evidence" value="ECO:0007669"/>
    <property type="project" value="UniProtKB-UniRule"/>
</dbReference>
<dbReference type="GO" id="GO:0019031">
    <property type="term" value="C:viral envelope"/>
    <property type="evidence" value="ECO:0007669"/>
    <property type="project" value="UniProtKB-KW"/>
</dbReference>
<dbReference type="GO" id="GO:0055036">
    <property type="term" value="C:virion membrane"/>
    <property type="evidence" value="ECO:0007669"/>
    <property type="project" value="UniProtKB-SubCell"/>
</dbReference>
<dbReference type="GO" id="GO:0075513">
    <property type="term" value="P:caveolin-mediated endocytosis of virus by host cell"/>
    <property type="evidence" value="ECO:0007669"/>
    <property type="project" value="UniProtKB-KW"/>
</dbReference>
<dbReference type="GO" id="GO:0039654">
    <property type="term" value="P:fusion of virus membrane with host endosome membrane"/>
    <property type="evidence" value="ECO:0007669"/>
    <property type="project" value="UniProtKB-KW"/>
</dbReference>
<dbReference type="GO" id="GO:0019062">
    <property type="term" value="P:virion attachment to host cell"/>
    <property type="evidence" value="ECO:0007669"/>
    <property type="project" value="UniProtKB-UniRule"/>
</dbReference>
<dbReference type="HAMAP" id="MF_04075">
    <property type="entry name" value="HBV_HBSAG"/>
    <property type="match status" value="1"/>
</dbReference>
<dbReference type="InterPro" id="IPR000349">
    <property type="entry name" value="HBV_HBSAG"/>
</dbReference>
<dbReference type="Pfam" id="PF00695">
    <property type="entry name" value="vMSA"/>
    <property type="match status" value="1"/>
</dbReference>
<name>HBSAG_HBVF3</name>
<proteinExistence type="evidence at protein level"/>